<protein>
    <recommendedName>
        <fullName>Hyaluronidase-3</fullName>
        <shortName>Hyal-3</shortName>
        <ecNumber evidence="5">3.2.1.35</ecNumber>
    </recommendedName>
    <alternativeName>
        <fullName>Hyaluronoglucosaminidase-3</fullName>
    </alternativeName>
    <alternativeName>
        <fullName>Lung carcinoma protein 3</fullName>
        <shortName>LuCa-3</shortName>
    </alternativeName>
</protein>
<feature type="signal peptide" evidence="3">
    <location>
        <begin position="1"/>
        <end position="20"/>
    </location>
</feature>
<feature type="chain" id="PRO_0000248200" description="Hyaluronidase-3">
    <location>
        <begin position="21"/>
        <end position="417"/>
    </location>
</feature>
<feature type="domain" description="EGF-like">
    <location>
        <begin position="352"/>
        <end position="407"/>
    </location>
</feature>
<feature type="active site" description="Proton donor" evidence="1">
    <location>
        <position position="129"/>
    </location>
</feature>
<feature type="glycosylation site" description="N-linked (GlcNAc...) asparagine" evidence="3">
    <location>
        <position position="69"/>
    </location>
</feature>
<feature type="glycosylation site" description="N-linked (GlcNAc...) asparagine" evidence="3">
    <location>
        <position position="215"/>
    </location>
</feature>
<feature type="disulfide bond" evidence="1">
    <location>
        <begin position="42"/>
        <end position="331"/>
    </location>
</feature>
<feature type="disulfide bond" evidence="1">
    <location>
        <begin position="205"/>
        <end position="220"/>
    </location>
</feature>
<feature type="disulfide bond" evidence="1">
    <location>
        <begin position="356"/>
        <end position="367"/>
    </location>
</feature>
<feature type="disulfide bond" evidence="1">
    <location>
        <begin position="361"/>
        <end position="395"/>
    </location>
</feature>
<feature type="disulfide bond" evidence="1">
    <location>
        <begin position="397"/>
        <end position="406"/>
    </location>
</feature>
<feature type="splice variant" id="VSP_020192" description="In isoform 3 and isoform 4." evidence="9">
    <location>
        <begin position="1"/>
        <end position="249"/>
    </location>
</feature>
<feature type="splice variant" id="VSP_020193" description="In isoform 3 and isoform 4." evidence="9">
    <original>R</original>
    <variation>M</variation>
    <location>
        <position position="250"/>
    </location>
</feature>
<feature type="splice variant" id="VSP_020194" description="In isoform 2 and isoform 4." evidence="9">
    <location>
        <begin position="299"/>
        <end position="328"/>
    </location>
</feature>
<feature type="sequence variant" id="VAR_027263" description="In dbSNP:rs13100173." evidence="6">
    <original>H</original>
    <variation>Y</variation>
    <location>
        <position position="113"/>
    </location>
</feature>
<feature type="sequence conflict" description="In Ref. 5; AAH05896." evidence="10" ref="5">
    <original>A</original>
    <variation>S</variation>
    <location>
        <position position="54"/>
    </location>
</feature>
<evidence type="ECO:0000250" key="1">
    <source>
        <dbReference type="UniProtKB" id="Q12794"/>
    </source>
</evidence>
<evidence type="ECO:0000250" key="2">
    <source>
        <dbReference type="UniProtKB" id="Q8VEI3"/>
    </source>
</evidence>
<evidence type="ECO:0000255" key="3"/>
<evidence type="ECO:0000269" key="4">
    <source>
    </source>
</evidence>
<evidence type="ECO:0000269" key="5">
    <source>
    </source>
</evidence>
<evidence type="ECO:0000269" key="6">
    <source>
    </source>
</evidence>
<evidence type="ECO:0000269" key="7">
    <source>
    </source>
</evidence>
<evidence type="ECO:0000269" key="8">
    <source>
    </source>
</evidence>
<evidence type="ECO:0000303" key="9">
    <source>
    </source>
</evidence>
<evidence type="ECO:0000305" key="10"/>
<sequence>MTTQLGPALVLGVALCLGCGQPLPQVPERPFSVLWNVPSAHCEARFGVHLPLNALGIIANRGQHFHGQNMTIFYKNQLGLYPYFGPRGTAHNGGIPQALPLDRHLALAAYQIHHSLRPGFAGPAVLDWEEWCPLWAGNWGRRRAYQAASWAWAQQVFPDLDPQEQLYKAYTGFEQAARALMEDTLRVAQALRPHGLWGFYHYPACGNGWHSMASNYTGRCHAATLARNTQLHWLWAASSALFPSIYLPPRLPPAHHQAFVRHRLEEAFRVALVGHRHPLPVLAYVRLTHRRSGRFLSQDDLVQSIGVSAALGAAGVVLWGDLSLSSSEEECWHLHDYLVDTLGPYVINVTRAAMACSHQRCHGHGRCARRDPGQMEAFLHLWPDGSLGDWKSFSCHCYWGWAGPTCQEPRPGPKEAV</sequence>
<comment type="function">
    <text evidence="2">Facilitates sperm penetration into the layer of cumulus cells surrounding the egg by digesting hyaluronic acid. Involved in induction of the acrosome reaction in the sperm. Involved in follicular atresia, the breakdown of immature ovarian follicles that are not selected to ovulate. Induces ovarian granulosa cell apoptosis, possibly via apoptotic signaling pathway involving CASP8 and CASP3 activation, and poly(ADP-ribose) polymerase (PARP) cleavage. Has no hyaluronidase activity in embryonic fibroblasts in vitro. Has no hyaluronidase activity in granulosa cells in vitro.</text>
</comment>
<comment type="catalytic activity">
    <reaction evidence="5">
        <text>Random hydrolysis of (1-&gt;4)-linkages between N-acetyl-beta-D-glucosamine and D-glucuronate residues in hyaluronate.</text>
        <dbReference type="EC" id="3.2.1.35"/>
    </reaction>
</comment>
<comment type="interaction">
    <interactant intactId="EBI-3913399">
        <id>O43820</id>
    </interactant>
    <interactant intactId="EBI-11983447">
        <id>Q8N9W6-4</id>
        <label>BOLL</label>
    </interactant>
    <organismsDiffer>false</organismsDiffer>
    <experiments>3</experiments>
</comment>
<comment type="interaction">
    <interactant intactId="EBI-3913399">
        <id>O43820</id>
    </interactant>
    <interactant intactId="EBI-1383687">
        <id>Q9UQM7</id>
        <label>CAMK2A</label>
    </interactant>
    <organismsDiffer>false</organismsDiffer>
    <experiments>3</experiments>
</comment>
<comment type="interaction">
    <interactant intactId="EBI-3913399">
        <id>O43820</id>
    </interactant>
    <interactant intactId="EBI-7875264">
        <id>O75553</id>
        <label>DAB1</label>
    </interactant>
    <organismsDiffer>false</organismsDiffer>
    <experiments>3</experiments>
</comment>
<comment type="subcellular location">
    <subcellularLocation>
        <location evidence="2">Secreted</location>
    </subcellularLocation>
    <subcellularLocation>
        <location evidence="2">Cell membrane</location>
    </subcellularLocation>
    <subcellularLocation>
        <location evidence="2">Cytoplasmic vesicle</location>
        <location evidence="2">Secretory vesicle</location>
        <location evidence="2">Acrosome</location>
    </subcellularLocation>
    <subcellularLocation>
        <location evidence="2">Endoplasmic reticulum</location>
    </subcellularLocation>
    <subcellularLocation>
        <location evidence="2">Early endosome</location>
    </subcellularLocation>
    <text evidence="2">Mostly present in low-density vesicles. Low levels in higher density vesicles of late endosomes and lysosomes. Localized in punctate cytoplasmic vesicles and in perinuclear structures, but does not colocalize with LAMP1. Localized on the plasma membrane over the acrosome and on the surface of the midpiece of the sperm tail.</text>
</comment>
<comment type="alternative products">
    <event type="alternative splicing"/>
    <isoform>
        <id>O43820-1</id>
        <name>1</name>
        <sequence type="displayed"/>
    </isoform>
    <isoform>
        <id>O43820-2</id>
        <name>2</name>
        <name>HYAL3v1</name>
        <sequence type="described" ref="VSP_020194"/>
    </isoform>
    <isoform>
        <id>O43820-3</id>
        <name>3</name>
        <name>HYAL3v2</name>
        <sequence type="described" ref="VSP_020192 VSP_020193"/>
    </isoform>
    <isoform>
        <id>O43820-4</id>
        <name>4</name>
        <name>HYAL3v3</name>
        <sequence type="described" ref="VSP_020192 VSP_020193 VSP_020194"/>
    </isoform>
</comment>
<comment type="tissue specificity">
    <text evidence="4 7 8">Expressed in sperm (PubMed:20586096). Highly expressed in epidermis of the skin, where it is expressed intracellularily in the deep horny layer (at protein level) (PubMed:21699545). Bone marrow, testis and kidney (PubMed:10493834).</text>
</comment>
<comment type="induction">
    <text evidence="8">Expression is not significantly up- or down-regulated by ultraviolet irradiation B (UV-B) in epidermis (PubMed:21699545).</text>
</comment>
<comment type="PTM">
    <text evidence="2">N-glycosylated.</text>
</comment>
<comment type="miscellaneous">
    <molecule>Isoform 2</molecule>
    <text evidence="10">Enzymatically inactive.</text>
</comment>
<comment type="miscellaneous">
    <molecule>Isoform 3</molecule>
    <text evidence="10">Enzymatically inactive.</text>
</comment>
<comment type="miscellaneous">
    <molecule>Isoform 4</molecule>
    <text evidence="10">Enzymatically inactive.</text>
</comment>
<comment type="similarity">
    <text evidence="10">Belongs to the glycosyl hydrolase 56 family.</text>
</comment>
<comment type="sequence caution" evidence="10">
    <conflict type="frameshift">
        <sequence resource="EMBL-CDS" id="AAC70915"/>
    </conflict>
</comment>
<accession>O43820</accession>
<accession>O60540</accession>
<accession>Q8NFK2</accession>
<accession>Q8NFK3</accession>
<accession>Q8NFK4</accession>
<accession>Q96E56</accession>
<accession>Q9BRW9</accession>
<gene>
    <name type="primary">HYAL3</name>
    <name type="synonym">LUCA3</name>
</gene>
<keyword id="KW-0025">Alternative splicing</keyword>
<keyword id="KW-1003">Cell membrane</keyword>
<keyword id="KW-0968">Cytoplasmic vesicle</keyword>
<keyword id="KW-1015">Disulfide bond</keyword>
<keyword id="KW-0245">EGF-like domain</keyword>
<keyword id="KW-0256">Endoplasmic reticulum</keyword>
<keyword id="KW-0967">Endosome</keyword>
<keyword id="KW-0278">Fertilization</keyword>
<keyword id="KW-0325">Glycoprotein</keyword>
<keyword id="KW-0326">Glycosidase</keyword>
<keyword id="KW-0378">Hydrolase</keyword>
<keyword id="KW-0472">Membrane</keyword>
<keyword id="KW-1267">Proteomics identification</keyword>
<keyword id="KW-1185">Reference proteome</keyword>
<keyword id="KW-0964">Secreted</keyword>
<keyword id="KW-0732">Signal</keyword>
<name>HYAL3_HUMAN</name>
<proteinExistence type="evidence at protein level"/>
<reference key="1">
    <citation type="journal article" date="1999" name="Genomics">
        <title>Expression analysis of six paralogous human hyaluronidase genes clustered on chromosomes 3p21 and 7q31.</title>
        <authorList>
            <person name="Csoka A.B."/>
            <person name="Scherer S.W."/>
            <person name="Stern R."/>
        </authorList>
    </citation>
    <scope>NUCLEOTIDE SEQUENCE [MRNA] (ISOFORM 1)</scope>
    <scope>TISSUE SPECIFICITY</scope>
</reference>
<reference key="2">
    <citation type="journal article" date="2002" name="J. Biol. Chem.">
        <title>Regulation of hyaluronidase activity by alternative mRNA splicing.</title>
        <authorList>
            <person name="Lokeshwar V.B."/>
            <person name="Schroeder G.L."/>
            <person name="Carey R.I."/>
            <person name="Soloway M.S."/>
            <person name="Iida N."/>
        </authorList>
    </citation>
    <scope>NUCLEOTIDE SEQUENCE [MRNA] (ISOFORMS 1; 2; 3 AND 4)</scope>
    <scope>CATALYTIC ACTIVITY</scope>
    <scope>ALTERNATIVE SPLICING</scope>
</reference>
<reference key="3">
    <citation type="submission" date="1998-01" db="EMBL/GenBank/DDBJ databases">
        <title>LUCA-3 a third hyaluronidase gene and candidate tumor suppressor gene located in the 3p21.3 homozygous deletion region.</title>
        <authorList>
            <person name="Fong K."/>
            <person name="Bader S."/>
            <person name="Lee C.-C."/>
            <person name="Latif F."/>
            <person name="Sekido Y."/>
            <person name="Duh F.-M."/>
            <person name="Wei M.-H."/>
            <person name="Cundiff S."/>
            <person name="Lerman M.I."/>
            <person name="Minna J.D."/>
        </authorList>
    </citation>
    <scope>NUCLEOTIDE SEQUENCE [MRNA] (ISOFORM 1)</scope>
</reference>
<reference key="4">
    <citation type="journal article" date="2006" name="Nature">
        <title>The DNA sequence, annotation and analysis of human chromosome 3.</title>
        <authorList>
            <person name="Muzny D.M."/>
            <person name="Scherer S.E."/>
            <person name="Kaul R."/>
            <person name="Wang J."/>
            <person name="Yu J."/>
            <person name="Sudbrak R."/>
            <person name="Buhay C.J."/>
            <person name="Chen R."/>
            <person name="Cree A."/>
            <person name="Ding Y."/>
            <person name="Dugan-Rocha S."/>
            <person name="Gill R."/>
            <person name="Gunaratne P."/>
            <person name="Harris R.A."/>
            <person name="Hawes A.C."/>
            <person name="Hernandez J."/>
            <person name="Hodgson A.V."/>
            <person name="Hume J."/>
            <person name="Jackson A."/>
            <person name="Khan Z.M."/>
            <person name="Kovar-Smith C."/>
            <person name="Lewis L.R."/>
            <person name="Lozado R.J."/>
            <person name="Metzker M.L."/>
            <person name="Milosavljevic A."/>
            <person name="Miner G.R."/>
            <person name="Morgan M.B."/>
            <person name="Nazareth L.V."/>
            <person name="Scott G."/>
            <person name="Sodergren E."/>
            <person name="Song X.-Z."/>
            <person name="Steffen D."/>
            <person name="Wei S."/>
            <person name="Wheeler D.A."/>
            <person name="Wright M.W."/>
            <person name="Worley K.C."/>
            <person name="Yuan Y."/>
            <person name="Zhang Z."/>
            <person name="Adams C.Q."/>
            <person name="Ansari-Lari M.A."/>
            <person name="Ayele M."/>
            <person name="Brown M.J."/>
            <person name="Chen G."/>
            <person name="Chen Z."/>
            <person name="Clendenning J."/>
            <person name="Clerc-Blankenburg K.P."/>
            <person name="Chen R."/>
            <person name="Chen Z."/>
            <person name="Davis C."/>
            <person name="Delgado O."/>
            <person name="Dinh H.H."/>
            <person name="Dong W."/>
            <person name="Draper H."/>
            <person name="Ernst S."/>
            <person name="Fu G."/>
            <person name="Gonzalez-Garay M.L."/>
            <person name="Garcia D.K."/>
            <person name="Gillett W."/>
            <person name="Gu J."/>
            <person name="Hao B."/>
            <person name="Haugen E."/>
            <person name="Havlak P."/>
            <person name="He X."/>
            <person name="Hennig S."/>
            <person name="Hu S."/>
            <person name="Huang W."/>
            <person name="Jackson L.R."/>
            <person name="Jacob L.S."/>
            <person name="Kelly S.H."/>
            <person name="Kube M."/>
            <person name="Levy R."/>
            <person name="Li Z."/>
            <person name="Liu B."/>
            <person name="Liu J."/>
            <person name="Liu W."/>
            <person name="Lu J."/>
            <person name="Maheshwari M."/>
            <person name="Nguyen B.-V."/>
            <person name="Okwuonu G.O."/>
            <person name="Palmeiri A."/>
            <person name="Pasternak S."/>
            <person name="Perez L.M."/>
            <person name="Phelps K.A."/>
            <person name="Plopper F.J."/>
            <person name="Qiang B."/>
            <person name="Raymond C."/>
            <person name="Rodriguez R."/>
            <person name="Saenphimmachak C."/>
            <person name="Santibanez J."/>
            <person name="Shen H."/>
            <person name="Shen Y."/>
            <person name="Subramanian S."/>
            <person name="Tabor P.E."/>
            <person name="Verduzco D."/>
            <person name="Waldron L."/>
            <person name="Wang J."/>
            <person name="Wang J."/>
            <person name="Wang Q."/>
            <person name="Williams G.A."/>
            <person name="Wong G.K.-S."/>
            <person name="Yao Z."/>
            <person name="Zhang J."/>
            <person name="Zhang X."/>
            <person name="Zhao G."/>
            <person name="Zhou J."/>
            <person name="Zhou Y."/>
            <person name="Nelson D."/>
            <person name="Lehrach H."/>
            <person name="Reinhardt R."/>
            <person name="Naylor S.L."/>
            <person name="Yang H."/>
            <person name="Olson M."/>
            <person name="Weinstock G."/>
            <person name="Gibbs R.A."/>
        </authorList>
    </citation>
    <scope>NUCLEOTIDE SEQUENCE [LARGE SCALE GENOMIC DNA]</scope>
</reference>
<reference key="5">
    <citation type="journal article" date="2004" name="Genome Res.">
        <title>The status, quality, and expansion of the NIH full-length cDNA project: the Mammalian Gene Collection (MGC).</title>
        <authorList>
            <consortium name="The MGC Project Team"/>
        </authorList>
    </citation>
    <scope>NUCLEOTIDE SEQUENCE [LARGE SCALE MRNA] (ISOFORM 1)</scope>
    <scope>VARIANT TYR-113</scope>
    <source>
        <tissue>Bone marrow</tissue>
        <tissue>Ovary</tissue>
    </source>
</reference>
<reference key="6">
    <citation type="journal article" date="2010" name="Mol. Reprod. Dev.">
        <title>Acidic hyaluronidase activity is present in mouse sperm and is reduced in the absence of SPAM1: evidence for a role for hyaluronidase 3 in mouse and human sperm.</title>
        <authorList>
            <person name="Reese K.L."/>
            <person name="Aravindan R.G."/>
            <person name="Griffiths G.S."/>
            <person name="Shao M."/>
            <person name="Wang Y."/>
            <person name="Galileo D.S."/>
            <person name="Atmuri V."/>
            <person name="Triggs-Raine B.L."/>
            <person name="Martin-Deleon P.A."/>
        </authorList>
    </citation>
    <scope>TISSUE SPECIFICITY</scope>
</reference>
<reference key="7">
    <citation type="journal article" date="2011" name="Photochem. Photobiol.">
        <title>Ultraviolet-B irradiation induces differential regulations of hyaluronidase expression and activity in normal human keratinocytes.</title>
        <authorList>
            <person name="Kurdykowski S."/>
            <person name="Mine S."/>
            <person name="Bardey V."/>
            <person name="Danoux L."/>
            <person name="Jeanmaire C."/>
            <person name="Pauly G."/>
            <person name="Brabencova E."/>
            <person name="Wegrowski Y."/>
            <person name="Maquart F.X."/>
        </authorList>
    </citation>
    <scope>TISSUE SPECIFICITY</scope>
    <scope>INDUCTION</scope>
</reference>
<dbReference type="EC" id="3.2.1.35" evidence="5"/>
<dbReference type="EMBL" id="AF036035">
    <property type="protein sequence ID" value="AAD04257.1"/>
    <property type="molecule type" value="mRNA"/>
</dbReference>
<dbReference type="EMBL" id="AF502909">
    <property type="protein sequence ID" value="AAM60775.1"/>
    <property type="molecule type" value="mRNA"/>
</dbReference>
<dbReference type="EMBL" id="AF502910">
    <property type="protein sequence ID" value="AAM60776.1"/>
    <property type="molecule type" value="mRNA"/>
</dbReference>
<dbReference type="EMBL" id="AF502911">
    <property type="protein sequence ID" value="AAM60777.1"/>
    <property type="molecule type" value="mRNA"/>
</dbReference>
<dbReference type="EMBL" id="AF502912">
    <property type="protein sequence ID" value="AAM60778.1"/>
    <property type="molecule type" value="mRNA"/>
</dbReference>
<dbReference type="EMBL" id="AF040710">
    <property type="protein sequence ID" value="AAC70915.1"/>
    <property type="status" value="ALT_FRAME"/>
    <property type="molecule type" value="mRNA"/>
</dbReference>
<dbReference type="EMBL" id="U73167">
    <property type="protein sequence ID" value="AAC02729.1"/>
    <property type="molecule type" value="Genomic_DNA"/>
</dbReference>
<dbReference type="EMBL" id="BC005896">
    <property type="protein sequence ID" value="AAH05896.1"/>
    <property type="molecule type" value="mRNA"/>
</dbReference>
<dbReference type="EMBL" id="BC012892">
    <property type="protein sequence ID" value="AAH12892.1"/>
    <property type="molecule type" value="mRNA"/>
</dbReference>
<dbReference type="CCDS" id="CCDS2815.1">
    <molecule id="O43820-1"/>
</dbReference>
<dbReference type="CCDS" id="CCDS56257.1">
    <molecule id="O43820-2"/>
</dbReference>
<dbReference type="CCDS" id="CCDS56259.1">
    <molecule id="O43820-4"/>
</dbReference>
<dbReference type="CCDS" id="CCDS56260.1">
    <molecule id="O43820-3"/>
</dbReference>
<dbReference type="RefSeq" id="NP_001186958.1">
    <molecule id="O43820-1"/>
    <property type="nucleotide sequence ID" value="NM_001200029.2"/>
</dbReference>
<dbReference type="RefSeq" id="NP_001186959.1">
    <molecule id="O43820-2"/>
    <property type="nucleotide sequence ID" value="NM_001200030.2"/>
</dbReference>
<dbReference type="RefSeq" id="NP_001186960.1">
    <molecule id="O43820-3"/>
    <property type="nucleotide sequence ID" value="NM_001200031.2"/>
</dbReference>
<dbReference type="RefSeq" id="NP_001186961.1">
    <molecule id="O43820-4"/>
    <property type="nucleotide sequence ID" value="NM_001200032.2"/>
</dbReference>
<dbReference type="RefSeq" id="NP_003540.2">
    <molecule id="O43820-1"/>
    <property type="nucleotide sequence ID" value="NM_003549.3"/>
</dbReference>
<dbReference type="SMR" id="O43820"/>
<dbReference type="BioGRID" id="113967">
    <property type="interactions" value="13"/>
</dbReference>
<dbReference type="FunCoup" id="O43820">
    <property type="interactions" value="214"/>
</dbReference>
<dbReference type="IntAct" id="O43820">
    <property type="interactions" value="8"/>
</dbReference>
<dbReference type="STRING" id="9606.ENSP00000337425"/>
<dbReference type="DrugBank" id="DB08818">
    <property type="generic name" value="Hyaluronic acid"/>
</dbReference>
<dbReference type="CAZy" id="GH56">
    <property type="family name" value="Glycoside Hydrolase Family 56"/>
</dbReference>
<dbReference type="GlyCosmos" id="O43820">
    <property type="glycosylation" value="2 sites, No reported glycans"/>
</dbReference>
<dbReference type="GlyGen" id="O43820">
    <property type="glycosylation" value="2 sites, 1 N-linked glycan (1 site)"/>
</dbReference>
<dbReference type="BioMuta" id="HYAL3"/>
<dbReference type="MassIVE" id="O43820"/>
<dbReference type="PaxDb" id="9606-ENSP00000337425"/>
<dbReference type="PeptideAtlas" id="O43820"/>
<dbReference type="ProteomicsDB" id="49183">
    <molecule id="O43820-1"/>
</dbReference>
<dbReference type="ProteomicsDB" id="49184">
    <molecule id="O43820-2"/>
</dbReference>
<dbReference type="ProteomicsDB" id="49185">
    <molecule id="O43820-3"/>
</dbReference>
<dbReference type="ProteomicsDB" id="49186">
    <molecule id="O43820-4"/>
</dbReference>
<dbReference type="Antibodypedia" id="34877">
    <property type="antibodies" value="189 antibodies from 27 providers"/>
</dbReference>
<dbReference type="DNASU" id="8372"/>
<dbReference type="Ensembl" id="ENST00000336307.6">
    <molecule id="O43820-1"/>
    <property type="protein sequence ID" value="ENSP00000337425.1"/>
    <property type="gene ID" value="ENSG00000186792.17"/>
</dbReference>
<dbReference type="Ensembl" id="ENST00000359051.7">
    <molecule id="O43820-2"/>
    <property type="protein sequence ID" value="ENSP00000351946.3"/>
    <property type="gene ID" value="ENSG00000186792.17"/>
</dbReference>
<dbReference type="Ensembl" id="ENST00000415204.5">
    <molecule id="O43820-3"/>
    <property type="protein sequence ID" value="ENSP00000401092.1"/>
    <property type="gene ID" value="ENSG00000186792.17"/>
</dbReference>
<dbReference type="Ensembl" id="ENST00000450982.6">
    <molecule id="O43820-2"/>
    <property type="protein sequence ID" value="ENSP00000391922.1"/>
    <property type="gene ID" value="ENSG00000186792.17"/>
</dbReference>
<dbReference type="Ensembl" id="ENST00000513170.1">
    <molecule id="O43820-4"/>
    <property type="protein sequence ID" value="ENSP00000424633.1"/>
    <property type="gene ID" value="ENSG00000186792.17"/>
</dbReference>
<dbReference type="Ensembl" id="ENST00000621157.5">
    <molecule id="O43820-1"/>
    <property type="protein sequence ID" value="ENSP00000479935.1"/>
    <property type="gene ID" value="ENSG00000186792.17"/>
</dbReference>
<dbReference type="GeneID" id="8372"/>
<dbReference type="KEGG" id="hsa:8372"/>
<dbReference type="MANE-Select" id="ENST00000336307.6">
    <property type="protein sequence ID" value="ENSP00000337425.1"/>
    <property type="RefSeq nucleotide sequence ID" value="NM_003549.4"/>
    <property type="RefSeq protein sequence ID" value="NP_003540.2"/>
</dbReference>
<dbReference type="UCSC" id="uc003czd.3">
    <molecule id="O43820-1"/>
    <property type="organism name" value="human"/>
</dbReference>
<dbReference type="AGR" id="HGNC:5322"/>
<dbReference type="CTD" id="8372"/>
<dbReference type="DisGeNET" id="8372"/>
<dbReference type="GeneCards" id="HYAL3"/>
<dbReference type="HGNC" id="HGNC:5322">
    <property type="gene designation" value="HYAL3"/>
</dbReference>
<dbReference type="HPA" id="ENSG00000186792">
    <property type="expression patterns" value="Tissue enhanced (bone)"/>
</dbReference>
<dbReference type="MalaCards" id="HYAL3"/>
<dbReference type="MIM" id="604038">
    <property type="type" value="gene"/>
</dbReference>
<dbReference type="neXtProt" id="NX_O43820"/>
<dbReference type="OpenTargets" id="ENSG00000186792"/>
<dbReference type="PharmGKB" id="PA29573"/>
<dbReference type="VEuPathDB" id="HostDB:ENSG00000186792"/>
<dbReference type="eggNOG" id="ENOG502QTXP">
    <property type="taxonomic scope" value="Eukaryota"/>
</dbReference>
<dbReference type="GeneTree" id="ENSGT01020000230364"/>
<dbReference type="HOGENOM" id="CLU_036366_0_0_1"/>
<dbReference type="InParanoid" id="O43820"/>
<dbReference type="OMA" id="GWATSWH"/>
<dbReference type="OrthoDB" id="5796153at2759"/>
<dbReference type="PAN-GO" id="O43820">
    <property type="GO annotations" value="2 GO annotations based on evolutionary models"/>
</dbReference>
<dbReference type="PhylomeDB" id="O43820"/>
<dbReference type="TreeFam" id="TF321598"/>
<dbReference type="BioCyc" id="MetaCyc:ENSG00000114366-MONOMER"/>
<dbReference type="BRENDA" id="3.2.1.35">
    <property type="organism ID" value="2681"/>
</dbReference>
<dbReference type="PathwayCommons" id="O43820"/>
<dbReference type="Reactome" id="R-HSA-2024101">
    <property type="pathway name" value="CS/DS degradation"/>
</dbReference>
<dbReference type="Reactome" id="R-HSA-2160916">
    <property type="pathway name" value="Hyaluronan uptake and degradation"/>
</dbReference>
<dbReference type="SignaLink" id="O43820"/>
<dbReference type="BioGRID-ORCS" id="8372">
    <property type="hits" value="20 hits in 1152 CRISPR screens"/>
</dbReference>
<dbReference type="ChiTaRS" id="HYAL3">
    <property type="organism name" value="human"/>
</dbReference>
<dbReference type="GeneWiki" id="HYAL3"/>
<dbReference type="GenomeRNAi" id="8372"/>
<dbReference type="Pharos" id="O43820">
    <property type="development level" value="Tbio"/>
</dbReference>
<dbReference type="PRO" id="PR:O43820"/>
<dbReference type="Proteomes" id="UP000005640">
    <property type="component" value="Chromosome 3"/>
</dbReference>
<dbReference type="RNAct" id="O43820">
    <property type="molecule type" value="protein"/>
</dbReference>
<dbReference type="Bgee" id="ENSG00000186792">
    <property type="expression patterns" value="Expressed in male germ line stem cell (sensu Vertebrata) in testis and 97 other cell types or tissues"/>
</dbReference>
<dbReference type="ExpressionAtlas" id="O43820">
    <property type="expression patterns" value="baseline and differential"/>
</dbReference>
<dbReference type="GO" id="GO:0002080">
    <property type="term" value="C:acrosomal membrane"/>
    <property type="evidence" value="ECO:0000250"/>
    <property type="project" value="UniProtKB"/>
</dbReference>
<dbReference type="GO" id="GO:0001669">
    <property type="term" value="C:acrosomal vesicle"/>
    <property type="evidence" value="ECO:0000250"/>
    <property type="project" value="UniProtKB"/>
</dbReference>
<dbReference type="GO" id="GO:0031410">
    <property type="term" value="C:cytoplasmic vesicle"/>
    <property type="evidence" value="ECO:0000314"/>
    <property type="project" value="UniProtKB"/>
</dbReference>
<dbReference type="GO" id="GO:0005769">
    <property type="term" value="C:early endosome"/>
    <property type="evidence" value="ECO:0000250"/>
    <property type="project" value="UniProtKB"/>
</dbReference>
<dbReference type="GO" id="GO:0005783">
    <property type="term" value="C:endoplasmic reticulum"/>
    <property type="evidence" value="ECO:0000250"/>
    <property type="project" value="UniProtKB"/>
</dbReference>
<dbReference type="GO" id="GO:0005576">
    <property type="term" value="C:extracellular region"/>
    <property type="evidence" value="ECO:0007669"/>
    <property type="project" value="UniProtKB-SubCell"/>
</dbReference>
<dbReference type="GO" id="GO:0005764">
    <property type="term" value="C:lysosome"/>
    <property type="evidence" value="ECO:0000314"/>
    <property type="project" value="UniProtKB"/>
</dbReference>
<dbReference type="GO" id="GO:0005886">
    <property type="term" value="C:plasma membrane"/>
    <property type="evidence" value="ECO:0007669"/>
    <property type="project" value="UniProtKB-SubCell"/>
</dbReference>
<dbReference type="GO" id="GO:0097225">
    <property type="term" value="C:sperm midpiece"/>
    <property type="evidence" value="ECO:0000250"/>
    <property type="project" value="UniProtKB"/>
</dbReference>
<dbReference type="GO" id="GO:0033906">
    <property type="term" value="F:hyaluronoglucuronidase activity"/>
    <property type="evidence" value="ECO:0000314"/>
    <property type="project" value="UniProtKB"/>
</dbReference>
<dbReference type="GO" id="GO:0004415">
    <property type="term" value="F:hyalurononglucosaminidase activity"/>
    <property type="evidence" value="ECO:0000314"/>
    <property type="project" value="UniProtKB"/>
</dbReference>
<dbReference type="GO" id="GO:0005975">
    <property type="term" value="P:carbohydrate metabolic process"/>
    <property type="evidence" value="ECO:0007669"/>
    <property type="project" value="InterPro"/>
</dbReference>
<dbReference type="GO" id="GO:0051216">
    <property type="term" value="P:cartilage development"/>
    <property type="evidence" value="ECO:0000270"/>
    <property type="project" value="UniProtKB"/>
</dbReference>
<dbReference type="GO" id="GO:0071347">
    <property type="term" value="P:cellular response to interleukin-1"/>
    <property type="evidence" value="ECO:0000314"/>
    <property type="project" value="UniProtKB"/>
</dbReference>
<dbReference type="GO" id="GO:0071356">
    <property type="term" value="P:cellular response to tumor necrosis factor"/>
    <property type="evidence" value="ECO:0000270"/>
    <property type="project" value="UniProtKB"/>
</dbReference>
<dbReference type="GO" id="GO:0071493">
    <property type="term" value="P:cellular response to UV-B"/>
    <property type="evidence" value="ECO:0000314"/>
    <property type="project" value="UniProtKB"/>
</dbReference>
<dbReference type="GO" id="GO:0030214">
    <property type="term" value="P:hyaluronan catabolic process"/>
    <property type="evidence" value="ECO:0000314"/>
    <property type="project" value="UniProtKB"/>
</dbReference>
<dbReference type="GO" id="GO:0006954">
    <property type="term" value="P:inflammatory response"/>
    <property type="evidence" value="ECO:0000314"/>
    <property type="project" value="UniProtKB"/>
</dbReference>
<dbReference type="GO" id="GO:2000355">
    <property type="term" value="P:negative regulation of ovarian follicle development"/>
    <property type="evidence" value="ECO:0000250"/>
    <property type="project" value="UniProtKB"/>
</dbReference>
<dbReference type="GO" id="GO:0001552">
    <property type="term" value="P:ovarian follicle atresia"/>
    <property type="evidence" value="ECO:0000250"/>
    <property type="project" value="UniProtKB"/>
</dbReference>
<dbReference type="GO" id="GO:0007341">
    <property type="term" value="P:penetration of zona pellucida"/>
    <property type="evidence" value="ECO:0000250"/>
    <property type="project" value="UniProtKB"/>
</dbReference>
<dbReference type="GO" id="GO:2000368">
    <property type="term" value="P:positive regulation of acrosomal vesicle exocytosis"/>
    <property type="evidence" value="ECO:0000250"/>
    <property type="project" value="UniProtKB"/>
</dbReference>
<dbReference type="GO" id="GO:0046677">
    <property type="term" value="P:response to antibiotic"/>
    <property type="evidence" value="ECO:0000270"/>
    <property type="project" value="UniProtKB"/>
</dbReference>
<dbReference type="GO" id="GO:0009615">
    <property type="term" value="P:response to virus"/>
    <property type="evidence" value="ECO:0000314"/>
    <property type="project" value="UniProtKB"/>
</dbReference>
<dbReference type="FunFam" id="3.20.20.70:FF:000065">
    <property type="entry name" value="Hyaluronidase"/>
    <property type="match status" value="1"/>
</dbReference>
<dbReference type="Gene3D" id="3.20.20.70">
    <property type="entry name" value="Aldolase class I"/>
    <property type="match status" value="1"/>
</dbReference>
<dbReference type="InterPro" id="IPR013785">
    <property type="entry name" value="Aldolase_TIM"/>
</dbReference>
<dbReference type="InterPro" id="IPR017853">
    <property type="entry name" value="Glycoside_hydrolase_SF"/>
</dbReference>
<dbReference type="InterPro" id="IPR018155">
    <property type="entry name" value="Hyaluronidase"/>
</dbReference>
<dbReference type="InterPro" id="IPR027260">
    <property type="entry name" value="Hyaluronidase-3"/>
</dbReference>
<dbReference type="PANTHER" id="PTHR11769">
    <property type="entry name" value="HYALURONIDASE"/>
    <property type="match status" value="1"/>
</dbReference>
<dbReference type="PANTHER" id="PTHR11769:SF19">
    <property type="entry name" value="HYALURONIDASE-3"/>
    <property type="match status" value="1"/>
</dbReference>
<dbReference type="Pfam" id="PF01630">
    <property type="entry name" value="Glyco_hydro_56"/>
    <property type="match status" value="1"/>
</dbReference>
<dbReference type="PIRSF" id="PIRSF038193">
    <property type="entry name" value="Hyaluronidase"/>
    <property type="match status" value="1"/>
</dbReference>
<dbReference type="PIRSF" id="PIRSF500776">
    <property type="entry name" value="Hyaluronidase_3"/>
    <property type="match status" value="1"/>
</dbReference>
<dbReference type="PRINTS" id="PR00846">
    <property type="entry name" value="GLHYDRLASE56"/>
</dbReference>
<dbReference type="SUPFAM" id="SSF51445">
    <property type="entry name" value="(Trans)glycosidases"/>
    <property type="match status" value="1"/>
</dbReference>
<dbReference type="PROSITE" id="PS00022">
    <property type="entry name" value="EGF_1"/>
    <property type="match status" value="1"/>
</dbReference>
<dbReference type="PROSITE" id="PS01186">
    <property type="entry name" value="EGF_2"/>
    <property type="match status" value="1"/>
</dbReference>
<organism>
    <name type="scientific">Homo sapiens</name>
    <name type="common">Human</name>
    <dbReference type="NCBI Taxonomy" id="9606"/>
    <lineage>
        <taxon>Eukaryota</taxon>
        <taxon>Metazoa</taxon>
        <taxon>Chordata</taxon>
        <taxon>Craniata</taxon>
        <taxon>Vertebrata</taxon>
        <taxon>Euteleostomi</taxon>
        <taxon>Mammalia</taxon>
        <taxon>Eutheria</taxon>
        <taxon>Euarchontoglires</taxon>
        <taxon>Primates</taxon>
        <taxon>Haplorrhini</taxon>
        <taxon>Catarrhini</taxon>
        <taxon>Hominidae</taxon>
        <taxon>Homo</taxon>
    </lineage>
</organism>